<protein>
    <recommendedName>
        <fullName evidence="1">Small ribosomal subunit protein uS14</fullName>
    </recommendedName>
    <alternativeName>
        <fullName evidence="2">30S ribosomal protein S14 type Z</fullName>
    </alternativeName>
</protein>
<dbReference type="EMBL" id="AE000783">
    <property type="protein sequence ID" value="AAC66851.2"/>
    <property type="molecule type" value="Genomic_DNA"/>
</dbReference>
<dbReference type="PIR" id="B70161">
    <property type="entry name" value="B70161"/>
</dbReference>
<dbReference type="RefSeq" id="NP_212625.2">
    <property type="nucleotide sequence ID" value="NC_001318.1"/>
</dbReference>
<dbReference type="RefSeq" id="WP_002557082.1">
    <property type="nucleotide sequence ID" value="NC_001318.1"/>
</dbReference>
<dbReference type="PDB" id="8FMW">
    <property type="method" value="EM"/>
    <property type="resolution" value="2.86 A"/>
    <property type="chains" value="N=2-61"/>
</dbReference>
<dbReference type="PDBsum" id="8FMW"/>
<dbReference type="EMDB" id="EMD-29298"/>
<dbReference type="SMR" id="O51444"/>
<dbReference type="STRING" id="224326.BB_0491"/>
<dbReference type="PaxDb" id="224326-BB_0491"/>
<dbReference type="EnsemblBacteria" id="AAC66851">
    <property type="protein sequence ID" value="AAC66851"/>
    <property type="gene ID" value="BB_0491"/>
</dbReference>
<dbReference type="KEGG" id="bbu:BB_0491"/>
<dbReference type="PATRIC" id="fig|224326.49.peg.882"/>
<dbReference type="HOGENOM" id="CLU_139869_3_0_12"/>
<dbReference type="OrthoDB" id="9810484at2"/>
<dbReference type="Proteomes" id="UP000001807">
    <property type="component" value="Chromosome"/>
</dbReference>
<dbReference type="GO" id="GO:0005737">
    <property type="term" value="C:cytoplasm"/>
    <property type="evidence" value="ECO:0007669"/>
    <property type="project" value="UniProtKB-ARBA"/>
</dbReference>
<dbReference type="GO" id="GO:0015935">
    <property type="term" value="C:small ribosomal subunit"/>
    <property type="evidence" value="ECO:0007669"/>
    <property type="project" value="TreeGrafter"/>
</dbReference>
<dbReference type="GO" id="GO:0019843">
    <property type="term" value="F:rRNA binding"/>
    <property type="evidence" value="ECO:0007669"/>
    <property type="project" value="UniProtKB-UniRule"/>
</dbReference>
<dbReference type="GO" id="GO:0003735">
    <property type="term" value="F:structural constituent of ribosome"/>
    <property type="evidence" value="ECO:0007669"/>
    <property type="project" value="InterPro"/>
</dbReference>
<dbReference type="GO" id="GO:0008270">
    <property type="term" value="F:zinc ion binding"/>
    <property type="evidence" value="ECO:0007669"/>
    <property type="project" value="UniProtKB-UniRule"/>
</dbReference>
<dbReference type="GO" id="GO:0006412">
    <property type="term" value="P:translation"/>
    <property type="evidence" value="ECO:0007669"/>
    <property type="project" value="UniProtKB-UniRule"/>
</dbReference>
<dbReference type="FunFam" id="4.10.830.10:FF:000001">
    <property type="entry name" value="30S ribosomal protein S14 type Z"/>
    <property type="match status" value="1"/>
</dbReference>
<dbReference type="Gene3D" id="4.10.830.10">
    <property type="entry name" value="30s Ribosomal Protein S14, Chain N"/>
    <property type="match status" value="1"/>
</dbReference>
<dbReference type="HAMAP" id="MF_01364_B">
    <property type="entry name" value="Ribosomal_uS14_2_B"/>
    <property type="match status" value="1"/>
</dbReference>
<dbReference type="InterPro" id="IPR001209">
    <property type="entry name" value="Ribosomal_uS14"/>
</dbReference>
<dbReference type="InterPro" id="IPR023053">
    <property type="entry name" value="Ribosomal_uS14_bact"/>
</dbReference>
<dbReference type="InterPro" id="IPR018271">
    <property type="entry name" value="Ribosomal_uS14_CS"/>
</dbReference>
<dbReference type="InterPro" id="IPR043140">
    <property type="entry name" value="Ribosomal_uS14_sf"/>
</dbReference>
<dbReference type="NCBIfam" id="NF005974">
    <property type="entry name" value="PRK08061.1"/>
    <property type="match status" value="1"/>
</dbReference>
<dbReference type="PANTHER" id="PTHR19836">
    <property type="entry name" value="30S RIBOSOMAL PROTEIN S14"/>
    <property type="match status" value="1"/>
</dbReference>
<dbReference type="PANTHER" id="PTHR19836:SF19">
    <property type="entry name" value="SMALL RIBOSOMAL SUBUNIT PROTEIN US14M"/>
    <property type="match status" value="1"/>
</dbReference>
<dbReference type="Pfam" id="PF00253">
    <property type="entry name" value="Ribosomal_S14"/>
    <property type="match status" value="1"/>
</dbReference>
<dbReference type="SUPFAM" id="SSF57716">
    <property type="entry name" value="Glucocorticoid receptor-like (DNA-binding domain)"/>
    <property type="match status" value="1"/>
</dbReference>
<dbReference type="PROSITE" id="PS00527">
    <property type="entry name" value="RIBOSOMAL_S14"/>
    <property type="match status" value="1"/>
</dbReference>
<feature type="chain" id="PRO_0000130874" description="Small ribosomal subunit protein uS14">
    <location>
        <begin position="1"/>
        <end position="61"/>
    </location>
</feature>
<feature type="binding site" evidence="1">
    <location>
        <position position="24"/>
    </location>
    <ligand>
        <name>Zn(2+)</name>
        <dbReference type="ChEBI" id="CHEBI:29105"/>
    </ligand>
</feature>
<feature type="binding site" evidence="1">
    <location>
        <position position="27"/>
    </location>
    <ligand>
        <name>Zn(2+)</name>
        <dbReference type="ChEBI" id="CHEBI:29105"/>
    </ligand>
</feature>
<feature type="binding site" evidence="1">
    <location>
        <position position="40"/>
    </location>
    <ligand>
        <name>Zn(2+)</name>
        <dbReference type="ChEBI" id="CHEBI:29105"/>
    </ligand>
</feature>
<feature type="binding site" evidence="1">
    <location>
        <position position="43"/>
    </location>
    <ligand>
        <name>Zn(2+)</name>
        <dbReference type="ChEBI" id="CHEBI:29105"/>
    </ligand>
</feature>
<evidence type="ECO:0000255" key="1">
    <source>
        <dbReference type="HAMAP-Rule" id="MF_01364"/>
    </source>
</evidence>
<evidence type="ECO:0000305" key="2"/>
<proteinExistence type="evidence at protein level"/>
<keyword id="KW-0002">3D-structure</keyword>
<keyword id="KW-0479">Metal-binding</keyword>
<keyword id="KW-1185">Reference proteome</keyword>
<keyword id="KW-0687">Ribonucleoprotein</keyword>
<keyword id="KW-0689">Ribosomal protein</keyword>
<keyword id="KW-0694">RNA-binding</keyword>
<keyword id="KW-0699">rRNA-binding</keyword>
<keyword id="KW-0862">Zinc</keyword>
<name>RS14Z_BORBU</name>
<sequence length="61" mass="7203">MAKKSMIIRALRKPKYKTRQNNRCKLCGRPRGYLRDFCMCRICFRKYASEGLIPGVSKSSW</sequence>
<gene>
    <name evidence="1" type="primary">rpsZ</name>
    <name evidence="1" type="synonym">rpsN</name>
    <name type="ordered locus">BB_0491</name>
</gene>
<comment type="function">
    <text evidence="1">Binds 16S rRNA, required for the assembly of 30S particles and may also be responsible for determining the conformation of the 16S rRNA at the A site.</text>
</comment>
<comment type="cofactor">
    <cofactor evidence="1">
        <name>Zn(2+)</name>
        <dbReference type="ChEBI" id="CHEBI:29105"/>
    </cofactor>
    <text evidence="1">Binds 1 zinc ion per subunit.</text>
</comment>
<comment type="subunit">
    <text evidence="1">Part of the 30S ribosomal subunit. Contacts proteins S3 and S10.</text>
</comment>
<comment type="similarity">
    <text evidence="1">Belongs to the universal ribosomal protein uS14 family. Zinc-binding uS14 subfamily.</text>
</comment>
<reference key="1">
    <citation type="journal article" date="1997" name="Nature">
        <title>Genomic sequence of a Lyme disease spirochaete, Borrelia burgdorferi.</title>
        <authorList>
            <person name="Fraser C.M."/>
            <person name="Casjens S."/>
            <person name="Huang W.M."/>
            <person name="Sutton G.G."/>
            <person name="Clayton R.A."/>
            <person name="Lathigra R."/>
            <person name="White O."/>
            <person name="Ketchum K.A."/>
            <person name="Dodson R.J."/>
            <person name="Hickey E.K."/>
            <person name="Gwinn M.L."/>
            <person name="Dougherty B.A."/>
            <person name="Tomb J.-F."/>
            <person name="Fleischmann R.D."/>
            <person name="Richardson D.L."/>
            <person name="Peterson J.D."/>
            <person name="Kerlavage A.R."/>
            <person name="Quackenbush J."/>
            <person name="Salzberg S.L."/>
            <person name="Hanson M."/>
            <person name="van Vugt R."/>
            <person name="Palmer N."/>
            <person name="Adams M.D."/>
            <person name="Gocayne J.D."/>
            <person name="Weidman J.F."/>
            <person name="Utterback T.R."/>
            <person name="Watthey L."/>
            <person name="McDonald L.A."/>
            <person name="Artiach P."/>
            <person name="Bowman C."/>
            <person name="Garland S.A."/>
            <person name="Fujii C."/>
            <person name="Cotton M.D."/>
            <person name="Horst K."/>
            <person name="Roberts K.M."/>
            <person name="Hatch B."/>
            <person name="Smith H.O."/>
            <person name="Venter J.C."/>
        </authorList>
    </citation>
    <scope>NUCLEOTIDE SEQUENCE [LARGE SCALE GENOMIC DNA]</scope>
    <source>
        <strain>ATCC 35210 / DSM 4680 / CIP 102532 / B31</strain>
    </source>
</reference>
<organism>
    <name type="scientific">Borreliella burgdorferi (strain ATCC 35210 / DSM 4680 / CIP 102532 / B31)</name>
    <name type="common">Borrelia burgdorferi</name>
    <dbReference type="NCBI Taxonomy" id="224326"/>
    <lineage>
        <taxon>Bacteria</taxon>
        <taxon>Pseudomonadati</taxon>
        <taxon>Spirochaetota</taxon>
        <taxon>Spirochaetia</taxon>
        <taxon>Spirochaetales</taxon>
        <taxon>Borreliaceae</taxon>
        <taxon>Borreliella</taxon>
    </lineage>
</organism>
<accession>O51444</accession>